<name>HYPA_GEODF</name>
<proteinExistence type="inferred from homology"/>
<comment type="function">
    <text evidence="1">Involved in the maturation of [NiFe] hydrogenases. Required for nickel insertion into the metal center of the hydrogenase.</text>
</comment>
<comment type="similarity">
    <text evidence="1">Belongs to the HypA/HybF family.</text>
</comment>
<evidence type="ECO:0000255" key="1">
    <source>
        <dbReference type="HAMAP-Rule" id="MF_00213"/>
    </source>
</evidence>
<protein>
    <recommendedName>
        <fullName evidence="1">Hydrogenase maturation factor HypA</fullName>
    </recommendedName>
</protein>
<accession>B9M4A8</accession>
<organism>
    <name type="scientific">Geotalea daltonii (strain DSM 22248 / JCM 15807 / FRC-32)</name>
    <name type="common">Geobacter daltonii</name>
    <dbReference type="NCBI Taxonomy" id="316067"/>
    <lineage>
        <taxon>Bacteria</taxon>
        <taxon>Pseudomonadati</taxon>
        <taxon>Thermodesulfobacteriota</taxon>
        <taxon>Desulfuromonadia</taxon>
        <taxon>Geobacterales</taxon>
        <taxon>Geobacteraceae</taxon>
        <taxon>Geotalea</taxon>
    </lineage>
</organism>
<gene>
    <name evidence="1" type="primary">hypA</name>
    <name type="ordered locus">Geob_3220</name>
</gene>
<feature type="chain" id="PRO_1000124775" description="Hydrogenase maturation factor HypA">
    <location>
        <begin position="1"/>
        <end position="110"/>
    </location>
</feature>
<feature type="binding site" evidence="1">
    <location>
        <position position="2"/>
    </location>
    <ligand>
        <name>Ni(2+)</name>
        <dbReference type="ChEBI" id="CHEBI:49786"/>
    </ligand>
</feature>
<feature type="binding site" evidence="1">
    <location>
        <position position="70"/>
    </location>
    <ligand>
        <name>Zn(2+)</name>
        <dbReference type="ChEBI" id="CHEBI:29105"/>
    </ligand>
</feature>
<feature type="binding site" evidence="1">
    <location>
        <position position="73"/>
    </location>
    <ligand>
        <name>Zn(2+)</name>
        <dbReference type="ChEBI" id="CHEBI:29105"/>
    </ligand>
</feature>
<feature type="binding site" evidence="1">
    <location>
        <position position="86"/>
    </location>
    <ligand>
        <name>Zn(2+)</name>
        <dbReference type="ChEBI" id="CHEBI:29105"/>
    </ligand>
</feature>
<feature type="binding site" evidence="1">
    <location>
        <position position="89"/>
    </location>
    <ligand>
        <name>Zn(2+)</name>
        <dbReference type="ChEBI" id="CHEBI:29105"/>
    </ligand>
</feature>
<reference key="1">
    <citation type="submission" date="2009-01" db="EMBL/GenBank/DDBJ databases">
        <title>Complete sequence of Geobacter sp. FRC-32.</title>
        <authorList>
            <consortium name="US DOE Joint Genome Institute"/>
            <person name="Lucas S."/>
            <person name="Copeland A."/>
            <person name="Lapidus A."/>
            <person name="Glavina del Rio T."/>
            <person name="Dalin E."/>
            <person name="Tice H."/>
            <person name="Bruce D."/>
            <person name="Goodwin L."/>
            <person name="Pitluck S."/>
            <person name="Saunders E."/>
            <person name="Brettin T."/>
            <person name="Detter J.C."/>
            <person name="Han C."/>
            <person name="Larimer F."/>
            <person name="Land M."/>
            <person name="Hauser L."/>
            <person name="Kyrpides N."/>
            <person name="Ovchinnikova G."/>
            <person name="Kostka J."/>
            <person name="Richardson P."/>
        </authorList>
    </citation>
    <scope>NUCLEOTIDE SEQUENCE [LARGE SCALE GENOMIC DNA]</scope>
    <source>
        <strain>DSM 22248 / JCM 15807 / FRC-32</strain>
    </source>
</reference>
<keyword id="KW-0479">Metal-binding</keyword>
<keyword id="KW-0533">Nickel</keyword>
<keyword id="KW-1185">Reference proteome</keyword>
<keyword id="KW-0862">Zinc</keyword>
<sequence>MHELSIARSVVDICTENAGGRRVCSVTIEIGALSGVATESIRFCFDACTRGTLLENALLLIEHVPASGRCRQCNSEFPVKACYDPCPACGGVGMDLITGEELRVKGLTVV</sequence>
<dbReference type="EMBL" id="CP001390">
    <property type="protein sequence ID" value="ACM21563.1"/>
    <property type="molecule type" value="Genomic_DNA"/>
</dbReference>
<dbReference type="RefSeq" id="WP_012648291.1">
    <property type="nucleotide sequence ID" value="NC_011979.1"/>
</dbReference>
<dbReference type="SMR" id="B9M4A8"/>
<dbReference type="STRING" id="316067.Geob_3220"/>
<dbReference type="KEGG" id="geo:Geob_3220"/>
<dbReference type="eggNOG" id="COG0375">
    <property type="taxonomic scope" value="Bacteria"/>
</dbReference>
<dbReference type="HOGENOM" id="CLU_126929_3_0_7"/>
<dbReference type="OrthoDB" id="9800361at2"/>
<dbReference type="Proteomes" id="UP000007721">
    <property type="component" value="Chromosome"/>
</dbReference>
<dbReference type="GO" id="GO:0016151">
    <property type="term" value="F:nickel cation binding"/>
    <property type="evidence" value="ECO:0007669"/>
    <property type="project" value="UniProtKB-UniRule"/>
</dbReference>
<dbReference type="GO" id="GO:0008270">
    <property type="term" value="F:zinc ion binding"/>
    <property type="evidence" value="ECO:0007669"/>
    <property type="project" value="UniProtKB-UniRule"/>
</dbReference>
<dbReference type="GO" id="GO:0051604">
    <property type="term" value="P:protein maturation"/>
    <property type="evidence" value="ECO:0007669"/>
    <property type="project" value="InterPro"/>
</dbReference>
<dbReference type="GO" id="GO:0036211">
    <property type="term" value="P:protein modification process"/>
    <property type="evidence" value="ECO:0007669"/>
    <property type="project" value="UniProtKB-UniRule"/>
</dbReference>
<dbReference type="Gene3D" id="3.30.2320.80">
    <property type="match status" value="1"/>
</dbReference>
<dbReference type="HAMAP" id="MF_00213">
    <property type="entry name" value="HypA_HybF"/>
    <property type="match status" value="1"/>
</dbReference>
<dbReference type="InterPro" id="IPR020538">
    <property type="entry name" value="Hydgase_Ni_incorp_HypA/HybF_CS"/>
</dbReference>
<dbReference type="InterPro" id="IPR000688">
    <property type="entry name" value="HypA/HybF"/>
</dbReference>
<dbReference type="PANTHER" id="PTHR34535">
    <property type="entry name" value="HYDROGENASE MATURATION FACTOR HYPA"/>
    <property type="match status" value="1"/>
</dbReference>
<dbReference type="PANTHER" id="PTHR34535:SF3">
    <property type="entry name" value="HYDROGENASE MATURATION FACTOR HYPA"/>
    <property type="match status" value="1"/>
</dbReference>
<dbReference type="Pfam" id="PF01155">
    <property type="entry name" value="HypA"/>
    <property type="match status" value="1"/>
</dbReference>
<dbReference type="PIRSF" id="PIRSF004761">
    <property type="entry name" value="Hydrgn_mat_HypA"/>
    <property type="match status" value="1"/>
</dbReference>
<dbReference type="PROSITE" id="PS01249">
    <property type="entry name" value="HYPA"/>
    <property type="match status" value="1"/>
</dbReference>